<gene>
    <name evidence="7" type="primary">Ube4a</name>
</gene>
<keyword id="KW-0007">Acetylation</keyword>
<keyword id="KW-0963">Cytoplasm</keyword>
<keyword id="KW-1185">Reference proteome</keyword>
<keyword id="KW-0808">Transferase</keyword>
<keyword id="KW-0833">Ubl conjugation pathway</keyword>
<organism>
    <name type="scientific">Rattus norvegicus</name>
    <name type="common">Rat</name>
    <dbReference type="NCBI Taxonomy" id="10116"/>
    <lineage>
        <taxon>Eukaryota</taxon>
        <taxon>Metazoa</taxon>
        <taxon>Chordata</taxon>
        <taxon>Craniata</taxon>
        <taxon>Vertebrata</taxon>
        <taxon>Euteleostomi</taxon>
        <taxon>Mammalia</taxon>
        <taxon>Eutheria</taxon>
        <taxon>Euarchontoglires</taxon>
        <taxon>Glires</taxon>
        <taxon>Rodentia</taxon>
        <taxon>Myomorpha</taxon>
        <taxon>Muroidea</taxon>
        <taxon>Muridae</taxon>
        <taxon>Murinae</taxon>
        <taxon>Rattus</taxon>
    </lineage>
</organism>
<proteinExistence type="evidence at transcript level"/>
<protein>
    <recommendedName>
        <fullName evidence="6">Ubiquitin conjugation factor E4 A</fullName>
        <ecNumber evidence="1">2.3.2.27</ecNumber>
    </recommendedName>
    <alternativeName>
        <fullName>RING-type E3 ubiquitin transferase E4 A</fullName>
    </alternativeName>
</protein>
<reference key="1">
    <citation type="journal article" date="2004" name="Genome Res.">
        <title>The status, quality, and expansion of the NIH full-length cDNA project: the Mammalian Gene Collection (MGC).</title>
        <authorList>
            <consortium name="The MGC Project Team"/>
        </authorList>
    </citation>
    <scope>NUCLEOTIDE SEQUENCE [LARGE SCALE MRNA]</scope>
    <source>
        <tissue>Prostate</tissue>
    </source>
</reference>
<name>UBE4A_RAT</name>
<feature type="chain" id="PRO_0000194992" description="Ubiquitin conjugation factor E4 A">
    <location>
        <begin position="1"/>
        <end position="1066"/>
    </location>
</feature>
<feature type="domain" description="U-box">
    <location>
        <begin position="987"/>
        <end position="1061"/>
    </location>
</feature>
<feature type="region of interest" description="Disordered" evidence="5">
    <location>
        <begin position="35"/>
        <end position="57"/>
    </location>
</feature>
<feature type="modified residue" description="N6-acetyllysine" evidence="3">
    <location>
        <position position="386"/>
    </location>
</feature>
<comment type="function">
    <text evidence="1 2">Ubiquitin-protein ligase that probably functions as an E3 ligase in conjunction with specific E1 and E2 ligases. May also function as an E4 ligase mediating the assembly of polyubiquitin chains on substrates ubiquitinated by another E3 ubiquitin ligase. Mediates 'Lys-48'-linked polyubiquitination of substrates.</text>
</comment>
<comment type="catalytic activity">
    <reaction evidence="1">
        <text>S-ubiquitinyl-[E2 ubiquitin-conjugating enzyme]-L-cysteine + [acceptor protein]-L-lysine = [E2 ubiquitin-conjugating enzyme]-L-cysteine + N(6)-ubiquitinyl-[acceptor protein]-L-lysine.</text>
        <dbReference type="EC" id="2.3.2.27"/>
    </reaction>
</comment>
<comment type="pathway">
    <text evidence="1">Protein modification; protein ubiquitination.</text>
</comment>
<comment type="subcellular location">
    <subcellularLocation>
        <location evidence="1">Cytoplasm</location>
    </subcellularLocation>
</comment>
<comment type="domain">
    <text evidence="2 4">The U-box domain is required for the ubiquitin protein ligase activity.</text>
</comment>
<comment type="similarity">
    <text evidence="6">Belongs to the ubiquitin conjugation factor E4 family.</text>
</comment>
<sequence>MTDQENNNNISSNPFAALFGSLADAKQFAAIHKEQLKQQSDELPASPDDSDNSVSESLDEFDYSVSEISRSFRTHQEMCEQLNINHMIQRIFLITLDNSDPNLKSGNGIPSRCVYLEEMAVELEDQDWLDMSNVEQAIFARLLLQDPGNHLISMTSSATLNLSADRDAGERHIFCYLYSCFQRAKEEITKVPENLLPFAVQCRNLTVSNTRTVLLTPEIYVDQNIHEQLVDLMLEAIQGAHFEDVTEFLEEVIEALLLDEEVRTFPEVMIPVFDILLGRIKDLELCQILLYAYLDILLYFTRQKDMAKVFLEYIQPKDPSNGQMYQKTLLGVILNISCLLKTPGVVENHGFFLNPSRSSPQEIKVQEANIHQFMAQFHEKIYQMLKNLLQLSPETKHGILFWLGNCLHANAGRTKIWANQMPEIFFQMYASDAFFLNLGAALLKLCQPFCKPRSSRLLTFNPTYCVLKDLNDEERKIKSVHMRGLDKETCLIPAVQEPVFPQSYNLVTENLALTEYTLYLGFHRLHDQMVKINQNLHRLQVAWRDAQQSSSPAADNLREQFERLMTIYLSTKTAMTEPQMLQNCLNLQVSMAVLLVQLAIGNEGSQPIELSFPLPDGYSSLAYVPEFFADNLGDFLIFLRRFAEDILETSADSLEHVLHFITIFTGSIERMKNPHLRAKLAEVLEAVMPHLDQTPSPLVSSVFHRKRVFCNFPYAPQLSEALIKVFVDIEFTGDPHQFEQKFNYRRPMYPILRYMWGTDSYRESIKDLADYASKNLEAMNPPLFLRFLNLLMNDAIFLLDEAIQYLSKIKIQQIEKDRGEWESLTPEARREKEAGLQMFGQLARFHNIMSNETIGTLSFLTSEIKSLFVHPFLAERIISMLNYFLQHLVGPKMGALKVKDFSEFDFKPQQLVSDICTIYLNLGDEENFCATVPKDGRSYSPTLFAQTVRVLKKINKPGNMIVAFSNLAERIKSLADLQQQEEETYADACDEFLDPIMSTLMSDPVVLPSSRVTVDGSTIARHLLSDQTDPFNRSPLTMDQIRPNTELKEKIQRWLAERKQQKEQLE</sequence>
<dbReference type="EC" id="2.3.2.27" evidence="1"/>
<dbReference type="EMBL" id="BC061761">
    <property type="protein sequence ID" value="AAH61761.1"/>
    <property type="molecule type" value="mRNA"/>
</dbReference>
<dbReference type="RefSeq" id="NP_997493.1">
    <property type="nucleotide sequence ID" value="NM_207610.1"/>
</dbReference>
<dbReference type="SMR" id="Q6P7A2"/>
<dbReference type="BioGRID" id="261081">
    <property type="interactions" value="2"/>
</dbReference>
<dbReference type="FunCoup" id="Q6P7A2">
    <property type="interactions" value="3904"/>
</dbReference>
<dbReference type="IntAct" id="Q6P7A2">
    <property type="interactions" value="1"/>
</dbReference>
<dbReference type="STRING" id="10116.ENSRNOP00000070856"/>
<dbReference type="PhosphoSitePlus" id="Q6P7A2"/>
<dbReference type="PaxDb" id="10116-ENSRNOP00000021321"/>
<dbReference type="PeptideAtlas" id="Q6P7A2"/>
<dbReference type="GeneID" id="315608"/>
<dbReference type="KEGG" id="rno:315608"/>
<dbReference type="UCSC" id="RGD:1303173">
    <property type="organism name" value="rat"/>
</dbReference>
<dbReference type="AGR" id="RGD:1303173"/>
<dbReference type="CTD" id="9354"/>
<dbReference type="RGD" id="1303173">
    <property type="gene designation" value="Ube4a"/>
</dbReference>
<dbReference type="eggNOG" id="KOG2042">
    <property type="taxonomic scope" value="Eukaryota"/>
</dbReference>
<dbReference type="InParanoid" id="Q6P7A2"/>
<dbReference type="Reactome" id="R-RNO-983168">
    <property type="pathway name" value="Antigen processing: Ubiquitination &amp; Proteasome degradation"/>
</dbReference>
<dbReference type="UniPathway" id="UPA00143"/>
<dbReference type="PRO" id="PR:Q6P7A2"/>
<dbReference type="Proteomes" id="UP000002494">
    <property type="component" value="Unplaced"/>
</dbReference>
<dbReference type="GO" id="GO:0005737">
    <property type="term" value="C:cytoplasm"/>
    <property type="evidence" value="ECO:0000266"/>
    <property type="project" value="RGD"/>
</dbReference>
<dbReference type="GO" id="GO:0005634">
    <property type="term" value="C:nucleus"/>
    <property type="evidence" value="ECO:0000318"/>
    <property type="project" value="GO_Central"/>
</dbReference>
<dbReference type="GO" id="GO:0000151">
    <property type="term" value="C:ubiquitin ligase complex"/>
    <property type="evidence" value="ECO:0007669"/>
    <property type="project" value="InterPro"/>
</dbReference>
<dbReference type="GO" id="GO:0061630">
    <property type="term" value="F:ubiquitin protein ligase activity"/>
    <property type="evidence" value="ECO:0000266"/>
    <property type="project" value="RGD"/>
</dbReference>
<dbReference type="GO" id="GO:0034450">
    <property type="term" value="F:ubiquitin-ubiquitin ligase activity"/>
    <property type="evidence" value="ECO:0000266"/>
    <property type="project" value="RGD"/>
</dbReference>
<dbReference type="GO" id="GO:0036503">
    <property type="term" value="P:ERAD pathway"/>
    <property type="evidence" value="ECO:0000318"/>
    <property type="project" value="GO_Central"/>
</dbReference>
<dbReference type="GO" id="GO:0000209">
    <property type="term" value="P:protein polyubiquitination"/>
    <property type="evidence" value="ECO:0000266"/>
    <property type="project" value="RGD"/>
</dbReference>
<dbReference type="GO" id="GO:0006511">
    <property type="term" value="P:ubiquitin-dependent protein catabolic process"/>
    <property type="evidence" value="ECO:0007669"/>
    <property type="project" value="InterPro"/>
</dbReference>
<dbReference type="CDD" id="cd16657">
    <property type="entry name" value="RING-Ubox_UBE4A"/>
    <property type="match status" value="1"/>
</dbReference>
<dbReference type="FunFam" id="3.30.40.10:FF:000055">
    <property type="entry name" value="Ubiquitin conjugation factor e4 a"/>
    <property type="match status" value="1"/>
</dbReference>
<dbReference type="Gene3D" id="3.30.40.10">
    <property type="entry name" value="Zinc/RING finger domain, C3HC4 (zinc finger)"/>
    <property type="match status" value="1"/>
</dbReference>
<dbReference type="InterPro" id="IPR019474">
    <property type="entry name" value="Ub_conjug_fac_E4_core"/>
</dbReference>
<dbReference type="InterPro" id="IPR045132">
    <property type="entry name" value="UBE4"/>
</dbReference>
<dbReference type="InterPro" id="IPR003613">
    <property type="entry name" value="Ubox_domain"/>
</dbReference>
<dbReference type="InterPro" id="IPR013083">
    <property type="entry name" value="Znf_RING/FYVE/PHD"/>
</dbReference>
<dbReference type="PANTHER" id="PTHR13931:SF16">
    <property type="entry name" value="UBIQUITIN CONJUGATION FACTOR E4 A"/>
    <property type="match status" value="1"/>
</dbReference>
<dbReference type="PANTHER" id="PTHR13931">
    <property type="entry name" value="UBIQUITINATION FACTOR E4"/>
    <property type="match status" value="1"/>
</dbReference>
<dbReference type="Pfam" id="PF04564">
    <property type="entry name" value="U-box"/>
    <property type="match status" value="1"/>
</dbReference>
<dbReference type="Pfam" id="PF10408">
    <property type="entry name" value="Ufd2P_core"/>
    <property type="match status" value="1"/>
</dbReference>
<dbReference type="SMART" id="SM00504">
    <property type="entry name" value="Ubox"/>
    <property type="match status" value="1"/>
</dbReference>
<dbReference type="SUPFAM" id="SSF57850">
    <property type="entry name" value="RING/U-box"/>
    <property type="match status" value="1"/>
</dbReference>
<dbReference type="PROSITE" id="PS51698">
    <property type="entry name" value="U_BOX"/>
    <property type="match status" value="1"/>
</dbReference>
<accession>Q6P7A2</accession>
<evidence type="ECO:0000250" key="1">
    <source>
        <dbReference type="UniProtKB" id="E9Q735"/>
    </source>
</evidence>
<evidence type="ECO:0000250" key="2">
    <source>
        <dbReference type="UniProtKB" id="P54860"/>
    </source>
</evidence>
<evidence type="ECO:0000250" key="3">
    <source>
        <dbReference type="UniProtKB" id="Q14139"/>
    </source>
</evidence>
<evidence type="ECO:0000250" key="4">
    <source>
        <dbReference type="UniProtKB" id="Q9ES00"/>
    </source>
</evidence>
<evidence type="ECO:0000256" key="5">
    <source>
        <dbReference type="SAM" id="MobiDB-lite"/>
    </source>
</evidence>
<evidence type="ECO:0000305" key="6"/>
<evidence type="ECO:0000312" key="7">
    <source>
        <dbReference type="RGD" id="1303173"/>
    </source>
</evidence>